<evidence type="ECO:0000255" key="1"/>
<evidence type="ECO:0000305" key="2"/>
<dbReference type="EMBL" id="AE006468">
    <property type="protein sequence ID" value="AAL20446.1"/>
    <property type="status" value="ALT_INIT"/>
    <property type="molecule type" value="Genomic_DNA"/>
</dbReference>
<dbReference type="RefSeq" id="NP_460487.1">
    <property type="nucleotide sequence ID" value="NC_003197.2"/>
</dbReference>
<dbReference type="RefSeq" id="WP_000217087.1">
    <property type="nucleotide sequence ID" value="NC_003197.2"/>
</dbReference>
<dbReference type="SMR" id="Q8ZPI0"/>
<dbReference type="STRING" id="99287.STM1527"/>
<dbReference type="PaxDb" id="99287-STM1527"/>
<dbReference type="GeneID" id="1253045"/>
<dbReference type="KEGG" id="stm:STM1527"/>
<dbReference type="PATRIC" id="fig|99287.12.peg.1615"/>
<dbReference type="HOGENOM" id="CLU_029790_4_2_6"/>
<dbReference type="PhylomeDB" id="Q8ZPI0"/>
<dbReference type="Proteomes" id="UP000001014">
    <property type="component" value="Chromosome"/>
</dbReference>
<dbReference type="GO" id="GO:0005886">
    <property type="term" value="C:plasma membrane"/>
    <property type="evidence" value="ECO:0007669"/>
    <property type="project" value="UniProtKB-SubCell"/>
</dbReference>
<dbReference type="GO" id="GO:0005254">
    <property type="term" value="F:chloride channel activity"/>
    <property type="evidence" value="ECO:0007669"/>
    <property type="project" value="InterPro"/>
</dbReference>
<dbReference type="InterPro" id="IPR021134">
    <property type="entry name" value="Bestrophin-like"/>
</dbReference>
<dbReference type="InterPro" id="IPR044669">
    <property type="entry name" value="YneE/VCCN1/2-like"/>
</dbReference>
<dbReference type="PANTHER" id="PTHR33281">
    <property type="entry name" value="UPF0187 PROTEIN YNEE"/>
    <property type="match status" value="1"/>
</dbReference>
<dbReference type="PANTHER" id="PTHR33281:SF19">
    <property type="entry name" value="VOLTAGE-DEPENDENT ANION CHANNEL-FORMING PROTEIN YNEE"/>
    <property type="match status" value="1"/>
</dbReference>
<dbReference type="Pfam" id="PF01062">
    <property type="entry name" value="Bestrophin"/>
    <property type="match status" value="1"/>
</dbReference>
<accession>Q8ZPI0</accession>
<protein>
    <recommendedName>
        <fullName>Voltage-dependent anion channel-forming protein YneE</fullName>
    </recommendedName>
</protein>
<organism>
    <name type="scientific">Salmonella typhimurium (strain LT2 / SGSC1412 / ATCC 700720)</name>
    <dbReference type="NCBI Taxonomy" id="99287"/>
    <lineage>
        <taxon>Bacteria</taxon>
        <taxon>Pseudomonadati</taxon>
        <taxon>Pseudomonadota</taxon>
        <taxon>Gammaproteobacteria</taxon>
        <taxon>Enterobacterales</taxon>
        <taxon>Enterobacteriaceae</taxon>
        <taxon>Salmonella</taxon>
    </lineage>
</organism>
<feature type="chain" id="PRO_0000217666" description="Voltage-dependent anion channel-forming protein YneE">
    <location>
        <begin position="1"/>
        <end position="304"/>
    </location>
</feature>
<feature type="transmembrane region" description="Helical" evidence="1">
    <location>
        <begin position="28"/>
        <end position="48"/>
    </location>
</feature>
<feature type="transmembrane region" description="Helical" evidence="1">
    <location>
        <begin position="50"/>
        <end position="70"/>
    </location>
</feature>
<feature type="transmembrane region" description="Helical" evidence="1">
    <location>
        <begin position="209"/>
        <end position="229"/>
    </location>
</feature>
<feature type="transmembrane region" description="Helical" evidence="1">
    <location>
        <begin position="235"/>
        <end position="255"/>
    </location>
</feature>
<gene>
    <name type="primary">yneE</name>
    <name type="ordered locus">STM1527</name>
</gene>
<keyword id="KW-1003">Cell membrane</keyword>
<keyword id="KW-0406">Ion transport</keyword>
<keyword id="KW-0472">Membrane</keyword>
<keyword id="KW-1185">Reference proteome</keyword>
<keyword id="KW-0812">Transmembrane</keyword>
<keyword id="KW-1133">Transmembrane helix</keyword>
<keyword id="KW-0813">Transport</keyword>
<sequence length="304" mass="34942">MIVRPQQHWIRLIFVWHGSVLSKIFSRLLLNFLLSIAVIIMLPWYTMLGIKFTLAPFSILGVAIAIFLGFRNNACYARYVEARHLWGQLMIASRSILREVKTTLPDERGIEDFVRLQIAFAHCLRMTLRRQPQTQVLGNYLDQEALQKVVASHSPANRILLLMGEWLAIRRRSGKLSDILFHSLNNRLNDMSSVLAGCERIANTPVPFAYTLILHRTVYLFCIMLPFALVVDLHYMTPFISVLISYTFIALDALAEELEDPFGTENNDLPLDAICNAIEIDLLQMNDERDIPAKRIPDKRYQLT</sequence>
<reference key="1">
    <citation type="journal article" date="2001" name="Nature">
        <title>Complete genome sequence of Salmonella enterica serovar Typhimurium LT2.</title>
        <authorList>
            <person name="McClelland M."/>
            <person name="Sanderson K.E."/>
            <person name="Spieth J."/>
            <person name="Clifton S.W."/>
            <person name="Latreille P."/>
            <person name="Courtney L."/>
            <person name="Porwollik S."/>
            <person name="Ali J."/>
            <person name="Dante M."/>
            <person name="Du F."/>
            <person name="Hou S."/>
            <person name="Layman D."/>
            <person name="Leonard S."/>
            <person name="Nguyen C."/>
            <person name="Scott K."/>
            <person name="Holmes A."/>
            <person name="Grewal N."/>
            <person name="Mulvaney E."/>
            <person name="Ryan E."/>
            <person name="Sun H."/>
            <person name="Florea L."/>
            <person name="Miller W."/>
            <person name="Stoneking T."/>
            <person name="Nhan M."/>
            <person name="Waterston R."/>
            <person name="Wilson R.K."/>
        </authorList>
    </citation>
    <scope>NUCLEOTIDE SEQUENCE [LARGE SCALE GENOMIC DNA]</scope>
    <source>
        <strain>LT2 / SGSC1412 / ATCC 700720</strain>
    </source>
</reference>
<comment type="subcellular location">
    <subcellularLocation>
        <location evidence="1">Cell membrane</location>
        <topology evidence="1">Multi-pass membrane protein</topology>
    </subcellularLocation>
</comment>
<comment type="similarity">
    <text evidence="2">Belongs to the anion channel-forming bestrophin (TC 1.A.46) family.</text>
</comment>
<comment type="sequence caution" evidence="2">
    <conflict type="erroneous initiation">
        <sequence resource="EMBL-CDS" id="AAL20446"/>
    </conflict>
</comment>
<name>YNEE_SALTY</name>
<proteinExistence type="inferred from homology"/>